<comment type="function">
    <text evidence="1">Catalyzes the oxidative demethylation of N-methyl-L-tryptophan.</text>
</comment>
<comment type="catalytic activity">
    <reaction evidence="1">
        <text>N(alpha)-methyl-L-tryptophan + O2 + H2O = L-tryptophan + formaldehyde + H2O2</text>
        <dbReference type="Rhea" id="RHEA:28006"/>
        <dbReference type="ChEBI" id="CHEBI:15377"/>
        <dbReference type="ChEBI" id="CHEBI:15379"/>
        <dbReference type="ChEBI" id="CHEBI:16240"/>
        <dbReference type="ChEBI" id="CHEBI:16842"/>
        <dbReference type="ChEBI" id="CHEBI:57283"/>
        <dbReference type="ChEBI" id="CHEBI:57912"/>
    </reaction>
</comment>
<comment type="cofactor">
    <cofactor evidence="1">
        <name>FAD</name>
        <dbReference type="ChEBI" id="CHEBI:57692"/>
    </cofactor>
    <text evidence="1">Binds 1 FAD per subunit.</text>
</comment>
<comment type="subunit">
    <text evidence="1">Monomer.</text>
</comment>
<comment type="similarity">
    <text evidence="1">Belongs to the MSOX/MTOX family. MTOX subfamily.</text>
</comment>
<proteinExistence type="inferred from homology"/>
<evidence type="ECO:0000255" key="1">
    <source>
        <dbReference type="HAMAP-Rule" id="MF_00515"/>
    </source>
</evidence>
<reference key="1">
    <citation type="journal article" date="2008" name="J. Bacteriol.">
        <title>Insights into the environmental resistance gene pool from the genome sequence of the multidrug-resistant environmental isolate Escherichia coli SMS-3-5.</title>
        <authorList>
            <person name="Fricke W.F."/>
            <person name="Wright M.S."/>
            <person name="Lindell A.H."/>
            <person name="Harkins D.M."/>
            <person name="Baker-Austin C."/>
            <person name="Ravel J."/>
            <person name="Stepanauskas R."/>
        </authorList>
    </citation>
    <scope>NUCLEOTIDE SEQUENCE [LARGE SCALE GENOMIC DNA]</scope>
    <source>
        <strain>SMS-3-5 / SECEC</strain>
    </source>
</reference>
<gene>
    <name evidence="1" type="primary">solA</name>
    <name type="ordered locus">EcSMS35_2070</name>
</gene>
<protein>
    <recommendedName>
        <fullName evidence="1">N-methyl-L-tryptophan oxidase</fullName>
        <shortName evidence="1">MTOX</shortName>
        <ecNumber evidence="1">1.5.3.-</ecNumber>
    </recommendedName>
</protein>
<dbReference type="EC" id="1.5.3.-" evidence="1"/>
<dbReference type="EMBL" id="CP000970">
    <property type="protein sequence ID" value="ACB16081.1"/>
    <property type="molecule type" value="Genomic_DNA"/>
</dbReference>
<dbReference type="RefSeq" id="WP_000872796.1">
    <property type="nucleotide sequence ID" value="NC_010498.1"/>
</dbReference>
<dbReference type="SMR" id="B1LIV1"/>
<dbReference type="KEGG" id="ecm:EcSMS35_2070"/>
<dbReference type="HOGENOM" id="CLU_007884_2_1_6"/>
<dbReference type="Proteomes" id="UP000007011">
    <property type="component" value="Chromosome"/>
</dbReference>
<dbReference type="GO" id="GO:0005829">
    <property type="term" value="C:cytosol"/>
    <property type="evidence" value="ECO:0007669"/>
    <property type="project" value="TreeGrafter"/>
</dbReference>
<dbReference type="GO" id="GO:0050660">
    <property type="term" value="F:flavin adenine dinucleotide binding"/>
    <property type="evidence" value="ECO:0007669"/>
    <property type="project" value="InterPro"/>
</dbReference>
<dbReference type="GO" id="GO:0050131">
    <property type="term" value="F:N-methyl-L-amino-acid oxidase activity"/>
    <property type="evidence" value="ECO:0007669"/>
    <property type="project" value="InterPro"/>
</dbReference>
<dbReference type="GO" id="GO:0008115">
    <property type="term" value="F:sarcosine oxidase activity"/>
    <property type="evidence" value="ECO:0007669"/>
    <property type="project" value="TreeGrafter"/>
</dbReference>
<dbReference type="Gene3D" id="3.30.9.10">
    <property type="entry name" value="D-Amino Acid Oxidase, subunit A, domain 2"/>
    <property type="match status" value="1"/>
</dbReference>
<dbReference type="Gene3D" id="3.50.50.60">
    <property type="entry name" value="FAD/NAD(P)-binding domain"/>
    <property type="match status" value="1"/>
</dbReference>
<dbReference type="HAMAP" id="MF_00515">
    <property type="entry name" value="MTOX"/>
    <property type="match status" value="1"/>
</dbReference>
<dbReference type="InterPro" id="IPR006076">
    <property type="entry name" value="FAD-dep_OxRdtase"/>
</dbReference>
<dbReference type="InterPro" id="IPR036188">
    <property type="entry name" value="FAD/NAD-bd_sf"/>
</dbReference>
<dbReference type="InterPro" id="IPR023493">
    <property type="entry name" value="Me_Trp_Oxase_MTOX"/>
</dbReference>
<dbReference type="InterPro" id="IPR045170">
    <property type="entry name" value="MTOX"/>
</dbReference>
<dbReference type="NCBIfam" id="NF008425">
    <property type="entry name" value="PRK11259.1"/>
    <property type="match status" value="1"/>
</dbReference>
<dbReference type="PANTHER" id="PTHR10961:SF7">
    <property type="entry name" value="FAD DEPENDENT OXIDOREDUCTASE DOMAIN-CONTAINING PROTEIN"/>
    <property type="match status" value="1"/>
</dbReference>
<dbReference type="PANTHER" id="PTHR10961">
    <property type="entry name" value="PEROXISOMAL SARCOSINE OXIDASE"/>
    <property type="match status" value="1"/>
</dbReference>
<dbReference type="Pfam" id="PF01266">
    <property type="entry name" value="DAO"/>
    <property type="match status" value="1"/>
</dbReference>
<dbReference type="SUPFAM" id="SSF54373">
    <property type="entry name" value="FAD-linked reductases, C-terminal domain"/>
    <property type="match status" value="1"/>
</dbReference>
<dbReference type="SUPFAM" id="SSF51905">
    <property type="entry name" value="FAD/NAD(P)-binding domain"/>
    <property type="match status" value="1"/>
</dbReference>
<accession>B1LIV1</accession>
<organism>
    <name type="scientific">Escherichia coli (strain SMS-3-5 / SECEC)</name>
    <dbReference type="NCBI Taxonomy" id="439855"/>
    <lineage>
        <taxon>Bacteria</taxon>
        <taxon>Pseudomonadati</taxon>
        <taxon>Pseudomonadota</taxon>
        <taxon>Gammaproteobacteria</taxon>
        <taxon>Enterobacterales</taxon>
        <taxon>Enterobacteriaceae</taxon>
        <taxon>Escherichia</taxon>
    </lineage>
</organism>
<sequence>MKYDLIIIGSGSVGAAAGYYATRAGLNVLMTDAHMPPHQHGSHHGDTRLIRHAYGEGEKYVPLVLRAQMLWDELSRHNEDDPIFVRSGVINLGPADSAFLANVAHSAEQWQLNVEQLDAQGIMARWPEIRVPDNYIGLFETDSGFLRSELAIKTWIQLAKEAGCAQLFNCPVTEIRHDDDGVTIETADGEYQAKKAIVCAGTWVKDLLPELPVQPVRKVFAWYQADGRYSVKNKFPAFTGELPNGDQYYGFPAENDALKIGKHNGGQVIHSADERVPFAEVVSDGSEAFPFLRNVLPGIGCCLYGAACTYDNSPDEDFIIDTLPAHDNTLLITGLSGHGFKFASVLGEIAADFAQDKKSDFDLTPFRLSRFQ</sequence>
<feature type="chain" id="PRO_1000127441" description="N-methyl-L-tryptophan oxidase">
    <location>
        <begin position="1"/>
        <end position="372"/>
    </location>
</feature>
<feature type="binding site" evidence="1">
    <location>
        <begin position="4"/>
        <end position="34"/>
    </location>
    <ligand>
        <name>FAD</name>
        <dbReference type="ChEBI" id="CHEBI:57692"/>
    </ligand>
</feature>
<feature type="modified residue" description="S-8alpha-FAD cysteine" evidence="1">
    <location>
        <position position="308"/>
    </location>
</feature>
<keyword id="KW-0274">FAD</keyword>
<keyword id="KW-0285">Flavoprotein</keyword>
<keyword id="KW-0560">Oxidoreductase</keyword>
<name>MTOX_ECOSM</name>